<keyword id="KW-0175">Coiled coil</keyword>
<keyword id="KW-0963">Cytoplasm</keyword>
<keyword id="KW-0391">Immunity</keyword>
<keyword id="KW-0399">Innate immunity</keyword>
<keyword id="KW-0479">Metal-binding</keyword>
<keyword id="KW-0539">Nucleus</keyword>
<keyword id="KW-1267">Proteomics identification</keyword>
<keyword id="KW-1185">Reference proteome</keyword>
<keyword id="KW-0808">Transferase</keyword>
<keyword id="KW-0832">Ubl conjugation</keyword>
<keyword id="KW-0862">Zinc</keyword>
<keyword id="KW-0863">Zinc-finger</keyword>
<accession>Q12899</accession>
<accession>A6NG96</accession>
<accession>Q5SRL2</accession>
<feature type="chain" id="PRO_0000056235" description="Tripartite motif-containing protein 26">
    <location>
        <begin position="1"/>
        <end position="539"/>
    </location>
</feature>
<feature type="domain" description="B30.2/SPRY" evidence="5">
    <location>
        <begin position="295"/>
        <end position="539"/>
    </location>
</feature>
<feature type="zinc finger region" description="RING-type" evidence="4">
    <location>
        <begin position="16"/>
        <end position="57"/>
    </location>
</feature>
<feature type="zinc finger region" description="B box-type" evidence="3">
    <location>
        <begin position="97"/>
        <end position="138"/>
    </location>
</feature>
<feature type="region of interest" description="Disordered" evidence="6">
    <location>
        <begin position="376"/>
        <end position="437"/>
    </location>
</feature>
<feature type="coiled-coil region" evidence="2">
    <location>
        <begin position="188"/>
        <end position="227"/>
    </location>
</feature>
<feature type="compositionally biased region" description="Acidic residues" evidence="6">
    <location>
        <begin position="380"/>
        <end position="434"/>
    </location>
</feature>
<feature type="binding site" evidence="3">
    <location>
        <position position="102"/>
    </location>
    <ligand>
        <name>Zn(2+)</name>
        <dbReference type="ChEBI" id="CHEBI:29105"/>
    </ligand>
</feature>
<feature type="binding site" evidence="3">
    <location>
        <position position="105"/>
    </location>
    <ligand>
        <name>Zn(2+)</name>
        <dbReference type="ChEBI" id="CHEBI:29105"/>
    </ligand>
</feature>
<feature type="binding site" evidence="3">
    <location>
        <position position="124"/>
    </location>
    <ligand>
        <name>Zn(2+)</name>
        <dbReference type="ChEBI" id="CHEBI:29105"/>
    </ligand>
</feature>
<feature type="binding site" evidence="3">
    <location>
        <position position="130"/>
    </location>
    <ligand>
        <name>Zn(2+)</name>
        <dbReference type="ChEBI" id="CHEBI:29105"/>
    </ligand>
</feature>
<feature type="sequence variant" id="VAR_052138" description="In dbSNP:rs17194565.">
    <original>Q</original>
    <variation>H</variation>
    <location>
        <position position="197"/>
    </location>
</feature>
<feature type="mutagenesis site" description="Strong loss of ubiquitination activity." evidence="14">
    <original>C</original>
    <variation>A</variation>
    <location>
        <position position="16"/>
    </location>
</feature>
<comment type="function">
    <text evidence="1 8 9 10 11 12 14 15 16 17">E3 ubiquitin-protein ligase which regulates the IFN-beta production and antiviral response downstream of various DNA-encoded pattern-recognition receptors (PRRs). Also plays a central role in determining the response to different forms of oxidative stress by controlling levels of DNA glycosylases NEIL1, NEIL3 and NTH1 that are involved in repair of damaged DNA (PubMed:29610152, PubMed:36232914). Promotes nuclear IRF3 ubiquitination and proteasomal degradation (PubMed:25763818). Bridges together TBK1 and NEMO during the innate response to viral infection leading to the activation of TBK1. Positively regulates LPS-mediated inflammatory innate immune response by catalyzing the 'Lys-11'-linked polyubiquitination of TAB1 to enhance its activation and subsequent NF-kappa-B and MAPK signaling (PubMed:34017102). In a manner independent of its catalytic activity, inhibits WWP2, a SOX2-directed E3 ubiquitin ligase, and thus protects SOX2 from polyubiquitination and proteasomal degradation (PubMed:34732716). Ubiquitinates the histone acetyltransferase protein complex component PHF20 and thereby triggers its degradation in the nucleus after its recruitment by the histone demethylase KDM6B, serving as a scaffold protein (PubMed:23452852). Upon induction by TGF-beta, ubiquitinates the TFIID component TAF7 for proteasomal degradation (PubMed:29203640). Induces ferroptosis by ubiquitinating SLC7A11, a critical protein for lipid reactive oxygen species (ROS) scavenging (By similarity). Inhibits directly hepatitis B virus replication by mediating HBX ubiquitination and subsequent degradation (PubMed:35872575).</text>
</comment>
<comment type="function">
    <text evidence="13">(Microbial infection) Promotes herpes simplex virus type 2/HHV-2 infection in vaginal epithelial cells by decreasing the nuclear localization of IRF3, the primary mediator of type I interferon activation.</text>
</comment>
<comment type="catalytic activity">
    <reaction evidence="10 11 12 14">
        <text>S-ubiquitinyl-[E2 ubiquitin-conjugating enzyme]-L-cysteine + [acceptor protein]-L-lysine = [E2 ubiquitin-conjugating enzyme]-L-cysteine + N(6)-ubiquitinyl-[acceptor protein]-L-lysine.</text>
        <dbReference type="EC" id="2.3.2.27"/>
    </reaction>
</comment>
<comment type="subunit">
    <text evidence="7 10">Interacts with TBK1; this interaction bridges together TBK1 and NEMO in order to activate TBK1 (PubMed:26611359). Interacts with INCA1 (PubMed:21750715).</text>
</comment>
<comment type="interaction">
    <interactant intactId="EBI-2341136">
        <id>Q12899</id>
    </interactant>
    <interactant intactId="EBI-10181188">
        <id>Q8N7W2-2</id>
        <label>BEND7</label>
    </interactant>
    <organismsDiffer>false</organismsDiffer>
    <experiments>3</experiments>
</comment>
<comment type="interaction">
    <interactant intactId="EBI-2341136">
        <id>Q12899</id>
    </interactant>
    <interactant intactId="EBI-12191873">
        <id>Q86UB2</id>
        <label>BIVM</label>
    </interactant>
    <organismsDiffer>false</organismsDiffer>
    <experiments>3</experiments>
</comment>
<comment type="interaction">
    <interactant intactId="EBI-2341136">
        <id>Q12899</id>
    </interactant>
    <interactant intactId="EBI-12135243">
        <id>O95208-2</id>
        <label>EPN2</label>
    </interactant>
    <organismsDiffer>false</organismsDiffer>
    <experiments>3</experiments>
</comment>
<comment type="interaction">
    <interactant intactId="EBI-2341136">
        <id>Q12899</id>
    </interactant>
    <interactant intactId="EBI-12866582">
        <id>I6L9I8</id>
        <label>EPN3</label>
    </interactant>
    <organismsDiffer>false</organismsDiffer>
    <experiments>3</experiments>
</comment>
<comment type="interaction">
    <interactant intactId="EBI-2341136">
        <id>Q12899</id>
    </interactant>
    <interactant intactId="EBI-6509505">
        <id>Q0VD86</id>
        <label>INCA1</label>
    </interactant>
    <organismsDiffer>false</organismsDiffer>
    <experiments>2</experiments>
</comment>
<comment type="interaction">
    <interactant intactId="EBI-2341136">
        <id>Q12899</id>
    </interactant>
    <interactant intactId="EBI-2868511">
        <id>O75367</id>
        <label>MACROH2A1</label>
    </interactant>
    <organismsDiffer>false</organismsDiffer>
    <experiments>3</experiments>
</comment>
<comment type="interaction">
    <interactant intactId="EBI-2341136">
        <id>Q12899</id>
    </interactant>
    <interactant intactId="EBI-1045155">
        <id>P43360</id>
        <label>MAGEA6</label>
    </interactant>
    <organismsDiffer>false</organismsDiffer>
    <experiments>4</experiments>
</comment>
<comment type="interaction">
    <interactant intactId="EBI-2341136">
        <id>Q12899</id>
    </interactant>
    <interactant intactId="EBI-741515">
        <id>Q9NVV9</id>
        <label>THAP1</label>
    </interactant>
    <organismsDiffer>false</organismsDiffer>
    <experiments>6</experiments>
</comment>
<comment type="interaction">
    <interactant intactId="EBI-2341136">
        <id>Q12899</id>
    </interactant>
    <interactant intactId="EBI-717810">
        <id>Q08117</id>
        <label>TLE5</label>
    </interactant>
    <organismsDiffer>false</organismsDiffer>
    <experiments>3</experiments>
</comment>
<comment type="interaction">
    <interactant intactId="EBI-2341136">
        <id>Q12899</id>
    </interactant>
    <interactant intactId="EBI-11741437">
        <id>Q08117-2</id>
        <label>TLE5</label>
    </interactant>
    <organismsDiffer>false</organismsDiffer>
    <experiments>3</experiments>
</comment>
<comment type="subcellular location">
    <subcellularLocation>
        <location evidence="9 14 16">Cytoplasm</location>
    </subcellularLocation>
    <subcellularLocation>
        <location evidence="9 13">Nucleus</location>
    </subcellularLocation>
    <text evidence="9">Viral infection mediates TRIM26 nuclear translocation.</text>
</comment>
<comment type="induction">
    <text evidence="11 13 16">By cytokine TGF-beta and binding of activated SMAD3 to the TRIM26 promoter (PubMed:29203640). Upon herpes simplex virus type 2/HHV-2 infection (PubMed:33419081). By type I interferon (PubMed:35872575).</text>
</comment>
<comment type="PTM">
    <text evidence="10">Autoubiquitinates upon viral infection. In turn, autoubiquitinated TRIM26 recruits NEMO and bridges TBK1-NEMO interaction.</text>
</comment>
<comment type="similarity">
    <text evidence="18">Belongs to the TRIM/RBCC family.</text>
</comment>
<organism>
    <name type="scientific">Homo sapiens</name>
    <name type="common">Human</name>
    <dbReference type="NCBI Taxonomy" id="9606"/>
    <lineage>
        <taxon>Eukaryota</taxon>
        <taxon>Metazoa</taxon>
        <taxon>Chordata</taxon>
        <taxon>Craniata</taxon>
        <taxon>Vertebrata</taxon>
        <taxon>Euteleostomi</taxon>
        <taxon>Mammalia</taxon>
        <taxon>Eutheria</taxon>
        <taxon>Euarchontoglires</taxon>
        <taxon>Primates</taxon>
        <taxon>Haplorrhini</taxon>
        <taxon>Catarrhini</taxon>
        <taxon>Hominidae</taxon>
        <taxon>Homo</taxon>
    </lineage>
</organism>
<name>TRI26_HUMAN</name>
<gene>
    <name type="primary">TRIM26</name>
    <name type="synonym">RNF95</name>
    <name type="synonym">ZNF173</name>
</gene>
<protein>
    <recommendedName>
        <fullName>Tripartite motif-containing protein 26</fullName>
        <ecNumber evidence="10 11 12 14">2.3.2.27</ecNumber>
    </recommendedName>
    <alternativeName>
        <fullName>Acid finger protein</fullName>
        <shortName>AFP</shortName>
    </alternativeName>
    <alternativeName>
        <fullName>RING finger protein 95</fullName>
    </alternativeName>
    <alternativeName>
        <fullName>Zinc finger protein 173</fullName>
    </alternativeName>
</protein>
<evidence type="ECO:0000250" key="1">
    <source>
        <dbReference type="UniProtKB" id="Q99PN3"/>
    </source>
</evidence>
<evidence type="ECO:0000255" key="2"/>
<evidence type="ECO:0000255" key="3">
    <source>
        <dbReference type="PROSITE-ProRule" id="PRU00024"/>
    </source>
</evidence>
<evidence type="ECO:0000255" key="4">
    <source>
        <dbReference type="PROSITE-ProRule" id="PRU00175"/>
    </source>
</evidence>
<evidence type="ECO:0000255" key="5">
    <source>
        <dbReference type="PROSITE-ProRule" id="PRU00548"/>
    </source>
</evidence>
<evidence type="ECO:0000256" key="6">
    <source>
        <dbReference type="SAM" id="MobiDB-lite"/>
    </source>
</evidence>
<evidence type="ECO:0000269" key="7">
    <source>
    </source>
</evidence>
<evidence type="ECO:0000269" key="8">
    <source>
    </source>
</evidence>
<evidence type="ECO:0000269" key="9">
    <source>
    </source>
</evidence>
<evidence type="ECO:0000269" key="10">
    <source>
    </source>
</evidence>
<evidence type="ECO:0000269" key="11">
    <source>
    </source>
</evidence>
<evidence type="ECO:0000269" key="12">
    <source>
    </source>
</evidence>
<evidence type="ECO:0000269" key="13">
    <source>
    </source>
</evidence>
<evidence type="ECO:0000269" key="14">
    <source>
    </source>
</evidence>
<evidence type="ECO:0000269" key="15">
    <source>
    </source>
</evidence>
<evidence type="ECO:0000269" key="16">
    <source>
    </source>
</evidence>
<evidence type="ECO:0000269" key="17">
    <source>
    </source>
</evidence>
<evidence type="ECO:0000305" key="18"/>
<proteinExistence type="evidence at protein level"/>
<sequence length="539" mass="62166">MATSAPLRSLEEEVTCSICLDYLRDPVTIDCGHVFCRSCTTDVRPISGSRPVCPLCKKPFKKENIRPVWQLASLVENIERLKVDKGRQPGEVTREQQDAKLCERHREKLHYYCEDDGKLLCVMCRESREHRPHTAVLMEKAAQPHREKILNHLSTLRRDRDKIQGFQAKGEADILAALKKLQDQRQYIVAEFEQGHQFLREREEHLLEQLAKLEQELTEGREKFKSRGVGELARLALVISELEGKAQQPAAELMQDTRDFLNRYPRKKFWVGKPIARVVKKKTGEFSDKLLSLQRGLREFQGKLLRDLEYKTVSVTLDPQSASGYLQLSEDWKCVTYTSLYKSAYLHPQQFDCEPGVLGSKGFTWGKVYWEVEVEREGWSEDEEEGDEEEEGEEEEEEEEAGYGDGYDDWETDEDEESLGDEEEEEEEEEEEVLESCMVGVARDSVKRKGDLSLRPEDGVWALRLSSSGIWANTSPEAELFPALRPRRVGIALDYEGGTVTFTNAESQELIYTFTATFTRRLVPFLWLKWPGTRLLLRP</sequence>
<dbReference type="EC" id="2.3.2.27" evidence="10 11 12 14"/>
<dbReference type="EMBL" id="U09825">
    <property type="protein sequence ID" value="AAA93131.1"/>
    <property type="molecule type" value="mRNA"/>
</dbReference>
<dbReference type="EMBL" id="BA000025">
    <property type="protein sequence ID" value="BAB63330.1"/>
    <property type="molecule type" value="Genomic_DNA"/>
</dbReference>
<dbReference type="EMBL" id="AB088090">
    <property type="protein sequence ID" value="BAC54923.1"/>
    <property type="molecule type" value="Genomic_DNA"/>
</dbReference>
<dbReference type="EMBL" id="AB202086">
    <property type="protein sequence ID" value="BAE78607.1"/>
    <property type="molecule type" value="Genomic_DNA"/>
</dbReference>
<dbReference type="EMBL" id="AB103596">
    <property type="protein sequence ID" value="BAF31258.1"/>
    <property type="molecule type" value="Genomic_DNA"/>
</dbReference>
<dbReference type="EMBL" id="AL844220">
    <property type="status" value="NOT_ANNOTATED_CDS"/>
    <property type="molecule type" value="Genomic_DNA"/>
</dbReference>
<dbReference type="EMBL" id="BX248419">
    <property type="status" value="NOT_ANNOTATED_CDS"/>
    <property type="molecule type" value="Genomic_DNA"/>
</dbReference>
<dbReference type="EMBL" id="CR788282">
    <property type="status" value="NOT_ANNOTATED_CDS"/>
    <property type="molecule type" value="Genomic_DNA"/>
</dbReference>
<dbReference type="EMBL" id="CR388382">
    <property type="status" value="NOT_ANNOTATED_CDS"/>
    <property type="molecule type" value="Genomic_DNA"/>
</dbReference>
<dbReference type="EMBL" id="BX927189">
    <property type="status" value="NOT_ANNOTATED_CDS"/>
    <property type="molecule type" value="Genomic_DNA"/>
</dbReference>
<dbReference type="EMBL" id="BX927221">
    <property type="status" value="NOT_ANNOTATED_CDS"/>
    <property type="molecule type" value="Genomic_DNA"/>
</dbReference>
<dbReference type="EMBL" id="CR759838">
    <property type="status" value="NOT_ANNOTATED_CDS"/>
    <property type="molecule type" value="Genomic_DNA"/>
</dbReference>
<dbReference type="EMBL" id="CH471081">
    <property type="protein sequence ID" value="EAX03272.1"/>
    <property type="molecule type" value="Genomic_DNA"/>
</dbReference>
<dbReference type="EMBL" id="BC024039">
    <property type="protein sequence ID" value="AAH24039.1"/>
    <property type="molecule type" value="mRNA"/>
</dbReference>
<dbReference type="EMBL" id="BC032297">
    <property type="protein sequence ID" value="AAH32297.1"/>
    <property type="molecule type" value="mRNA"/>
</dbReference>
<dbReference type="CCDS" id="CCDS4678.1"/>
<dbReference type="RefSeq" id="NP_001229712.1">
    <property type="nucleotide sequence ID" value="NM_001242783.2"/>
</dbReference>
<dbReference type="RefSeq" id="NP_003440.1">
    <property type="nucleotide sequence ID" value="NM_003449.5"/>
</dbReference>
<dbReference type="RefSeq" id="XP_005249431.1">
    <property type="nucleotide sequence ID" value="XM_005249374.3"/>
</dbReference>
<dbReference type="RefSeq" id="XP_005249432.1">
    <property type="nucleotide sequence ID" value="XM_005249375.3"/>
</dbReference>
<dbReference type="RefSeq" id="XP_005249433.1">
    <property type="nucleotide sequence ID" value="XM_005249376.3"/>
</dbReference>
<dbReference type="RefSeq" id="XP_005249434.1">
    <property type="nucleotide sequence ID" value="XM_005249377.3"/>
</dbReference>
<dbReference type="RefSeq" id="XP_005249435.1">
    <property type="nucleotide sequence ID" value="XM_005249378.3"/>
</dbReference>
<dbReference type="RefSeq" id="XP_006715243.1">
    <property type="nucleotide sequence ID" value="XM_006715180.3"/>
</dbReference>
<dbReference type="RefSeq" id="XP_054184484.1">
    <property type="nucleotide sequence ID" value="XM_054328509.1"/>
</dbReference>
<dbReference type="RefSeq" id="XP_054184485.1">
    <property type="nucleotide sequence ID" value="XM_054328510.1"/>
</dbReference>
<dbReference type="RefSeq" id="XP_054184486.1">
    <property type="nucleotide sequence ID" value="XM_054328511.1"/>
</dbReference>
<dbReference type="RefSeq" id="XP_054184487.1">
    <property type="nucleotide sequence ID" value="XM_054328512.1"/>
</dbReference>
<dbReference type="RefSeq" id="XP_054185838.1">
    <property type="nucleotide sequence ID" value="XM_054329863.1"/>
</dbReference>
<dbReference type="RefSeq" id="XP_054185839.1">
    <property type="nucleotide sequence ID" value="XM_054329864.1"/>
</dbReference>
<dbReference type="RefSeq" id="XP_054185840.1">
    <property type="nucleotide sequence ID" value="XM_054329865.1"/>
</dbReference>
<dbReference type="RefSeq" id="XP_054185841.1">
    <property type="nucleotide sequence ID" value="XM_054329866.1"/>
</dbReference>
<dbReference type="RefSeq" id="XP_054185842.1">
    <property type="nucleotide sequence ID" value="XM_054329867.1"/>
</dbReference>
<dbReference type="RefSeq" id="XP_054185843.1">
    <property type="nucleotide sequence ID" value="XM_054329868.1"/>
</dbReference>
<dbReference type="RefSeq" id="XP_054186322.1">
    <property type="nucleotide sequence ID" value="XM_054330347.1"/>
</dbReference>
<dbReference type="RefSeq" id="XP_054186323.1">
    <property type="nucleotide sequence ID" value="XM_054330348.1"/>
</dbReference>
<dbReference type="RefSeq" id="XP_054186324.1">
    <property type="nucleotide sequence ID" value="XM_054330349.1"/>
</dbReference>
<dbReference type="RefSeq" id="XP_054186325.1">
    <property type="nucleotide sequence ID" value="XM_054330350.1"/>
</dbReference>
<dbReference type="RefSeq" id="XP_054186600.1">
    <property type="nucleotide sequence ID" value="XM_054330625.1"/>
</dbReference>
<dbReference type="RefSeq" id="XP_054186601.1">
    <property type="nucleotide sequence ID" value="XM_054330626.1"/>
</dbReference>
<dbReference type="RefSeq" id="XP_054186602.1">
    <property type="nucleotide sequence ID" value="XM_054330627.1"/>
</dbReference>
<dbReference type="RefSeq" id="XP_054186603.1">
    <property type="nucleotide sequence ID" value="XM_054330628.1"/>
</dbReference>
<dbReference type="RefSeq" id="XP_054186604.1">
    <property type="nucleotide sequence ID" value="XM_054330629.1"/>
</dbReference>
<dbReference type="RefSeq" id="XP_054186605.1">
    <property type="nucleotide sequence ID" value="XM_054330630.1"/>
</dbReference>
<dbReference type="RefSeq" id="XP_054187096.1">
    <property type="nucleotide sequence ID" value="XM_054331121.1"/>
</dbReference>
<dbReference type="RefSeq" id="XP_054187097.1">
    <property type="nucleotide sequence ID" value="XM_054331122.1"/>
</dbReference>
<dbReference type="RefSeq" id="XP_054187098.1">
    <property type="nucleotide sequence ID" value="XM_054331123.1"/>
</dbReference>
<dbReference type="RefSeq" id="XP_054187099.1">
    <property type="nucleotide sequence ID" value="XM_054331124.1"/>
</dbReference>
<dbReference type="RefSeq" id="XP_054187355.1">
    <property type="nucleotide sequence ID" value="XM_054331380.1"/>
</dbReference>
<dbReference type="RefSeq" id="XP_054187356.1">
    <property type="nucleotide sequence ID" value="XM_054331381.1"/>
</dbReference>
<dbReference type="RefSeq" id="XP_054187357.1">
    <property type="nucleotide sequence ID" value="XM_054331382.1"/>
</dbReference>
<dbReference type="RefSeq" id="XP_054187358.1">
    <property type="nucleotide sequence ID" value="XM_054331383.1"/>
</dbReference>
<dbReference type="RefSeq" id="XP_054187359.1">
    <property type="nucleotide sequence ID" value="XM_054331384.1"/>
</dbReference>
<dbReference type="RefSeq" id="XP_054212305.1">
    <property type="nucleotide sequence ID" value="XM_054356330.1"/>
</dbReference>
<dbReference type="RefSeq" id="XP_054212306.1">
    <property type="nucleotide sequence ID" value="XM_054356331.1"/>
</dbReference>
<dbReference type="RefSeq" id="XP_054212307.1">
    <property type="nucleotide sequence ID" value="XM_054356332.1"/>
</dbReference>
<dbReference type="RefSeq" id="XP_054212308.1">
    <property type="nucleotide sequence ID" value="XM_054356333.1"/>
</dbReference>
<dbReference type="RefSeq" id="XP_054212309.1">
    <property type="nucleotide sequence ID" value="XM_054356334.1"/>
</dbReference>
<dbReference type="RefSeq" id="XP_054212310.1">
    <property type="nucleotide sequence ID" value="XM_054356335.1"/>
</dbReference>
<dbReference type="SMR" id="Q12899"/>
<dbReference type="BioGRID" id="113515">
    <property type="interactions" value="208"/>
</dbReference>
<dbReference type="DIP" id="DIP-52853N"/>
<dbReference type="FunCoup" id="Q12899">
    <property type="interactions" value="131"/>
</dbReference>
<dbReference type="IntAct" id="Q12899">
    <property type="interactions" value="96"/>
</dbReference>
<dbReference type="MINT" id="Q12899"/>
<dbReference type="STRING" id="9606.ENSP00000410446"/>
<dbReference type="iPTMnet" id="Q12899"/>
<dbReference type="PhosphoSitePlus" id="Q12899"/>
<dbReference type="SwissPalm" id="Q12899"/>
<dbReference type="BioMuta" id="TRIM26"/>
<dbReference type="DMDM" id="17380344"/>
<dbReference type="jPOST" id="Q12899"/>
<dbReference type="MassIVE" id="Q12899"/>
<dbReference type="PaxDb" id="9606-ENSP00000410446"/>
<dbReference type="PeptideAtlas" id="Q12899"/>
<dbReference type="ProteomicsDB" id="59009"/>
<dbReference type="Pumba" id="Q12899"/>
<dbReference type="Antibodypedia" id="26253">
    <property type="antibodies" value="130 antibodies from 22 providers"/>
</dbReference>
<dbReference type="DNASU" id="7726"/>
<dbReference type="Ensembl" id="ENST00000327357.9">
    <property type="protein sequence ID" value="ENSP00000331131.5"/>
    <property type="gene ID" value="ENSG00000137313.15"/>
</dbReference>
<dbReference type="Ensembl" id="ENST00000383607.6">
    <property type="protein sequence ID" value="ENSP00000373102.2"/>
    <property type="gene ID" value="ENSG00000137313.15"/>
</dbReference>
<dbReference type="Ensembl" id="ENST00000396558.5">
    <property type="protein sequence ID" value="ENSP00000379806.1"/>
    <property type="gene ID" value="ENSG00000137313.15"/>
</dbReference>
<dbReference type="Ensembl" id="ENST00000415923.6">
    <property type="protein sequence ID" value="ENSP00000415755.2"/>
    <property type="gene ID" value="ENSG00000231002.7"/>
</dbReference>
<dbReference type="Ensembl" id="ENST00000422349.5">
    <property type="protein sequence ID" value="ENSP00000396188.1"/>
    <property type="gene ID" value="ENSG00000234046.7"/>
</dbReference>
<dbReference type="Ensembl" id="ENST00000425523.5">
    <property type="protein sequence ID" value="ENSP00000393011.1"/>
    <property type="gene ID" value="ENSG00000228881.7"/>
</dbReference>
<dbReference type="Ensembl" id="ENST00000425831.5">
    <property type="protein sequence ID" value="ENSP00000394371.1"/>
    <property type="gene ID" value="ENSG00000231641.9"/>
</dbReference>
<dbReference type="Ensembl" id="ENST00000427535.5">
    <property type="protein sequence ID" value="ENSP00000398545.1"/>
    <property type="gene ID" value="ENSG00000234046.7"/>
</dbReference>
<dbReference type="Ensembl" id="ENST00000428486.5">
    <property type="protein sequence ID" value="ENSP00000414248.1"/>
    <property type="gene ID" value="ENSG00000231002.7"/>
</dbReference>
<dbReference type="Ensembl" id="ENST00000432326.5">
    <property type="protein sequence ID" value="ENSP00000407876.1"/>
    <property type="gene ID" value="ENSG00000231641.9"/>
</dbReference>
<dbReference type="Ensembl" id="ENST00000433314.5">
    <property type="protein sequence ID" value="ENSP00000402395.1"/>
    <property type="gene ID" value="ENSG00000226060.7"/>
</dbReference>
<dbReference type="Ensembl" id="ENST00000436219.5">
    <property type="protein sequence ID" value="ENSP00000390258.1"/>
    <property type="gene ID" value="ENSG00000230230.7"/>
</dbReference>
<dbReference type="Ensembl" id="ENST00000437089.5">
    <property type="protein sequence ID" value="ENSP00000395491.1"/>
    <property type="gene ID" value="ENSG00000234127.9"/>
</dbReference>
<dbReference type="Ensembl" id="ENST00000438384.5">
    <property type="protein sequence ID" value="ENSP00000416737.1"/>
    <property type="gene ID" value="ENSG00000231641.9"/>
</dbReference>
<dbReference type="Ensembl" id="ENST00000438908.5">
    <property type="protein sequence ID" value="ENSP00000409182.1"/>
    <property type="gene ID" value="ENSG00000230230.7"/>
</dbReference>
<dbReference type="Ensembl" id="ENST00000439094.6">
    <property type="protein sequence ID" value="ENSP00000389203.2"/>
    <property type="gene ID" value="ENSG00000228881.7"/>
</dbReference>
<dbReference type="Ensembl" id="ENST00000445259.6">
    <property type="protein sequence ID" value="ENSP00000407294.2"/>
    <property type="gene ID" value="ENSG00000234046.7"/>
</dbReference>
<dbReference type="Ensembl" id="ENST00000447711.6">
    <property type="protein sequence ID" value="ENSP00000408233.2"/>
    <property type="gene ID" value="ENSG00000226060.7"/>
</dbReference>
<dbReference type="Ensembl" id="ENST00000450392.5">
    <property type="protein sequence ID" value="ENSP00000394421.1"/>
    <property type="gene ID" value="ENSG00000231002.7"/>
</dbReference>
<dbReference type="Ensembl" id="ENST00000453195.5">
    <property type="protein sequence ID" value="ENSP00000391879.1"/>
    <property type="gene ID" value="ENSG00000234127.9"/>
</dbReference>
<dbReference type="Ensembl" id="ENST00000454678.7">
    <property type="protein sequence ID" value="ENSP00000410446.2"/>
    <property type="gene ID" value="ENSG00000234127.9"/>
</dbReference>
<dbReference type="Ensembl" id="ENST00000455000.6">
    <property type="protein sequence ID" value="ENSP00000392805.2"/>
    <property type="gene ID" value="ENSG00000230230.7"/>
</dbReference>
<dbReference type="Ensembl" id="ENST00000456093.5">
    <property type="protein sequence ID" value="ENSP00000406707.1"/>
    <property type="gene ID" value="ENSG00000226060.7"/>
</dbReference>
<dbReference type="Ensembl" id="ENST00000456770.5">
    <property type="protein sequence ID" value="ENSP00000415328.1"/>
    <property type="gene ID" value="ENSG00000228881.7"/>
</dbReference>
<dbReference type="GeneID" id="7726"/>
<dbReference type="KEGG" id="hsa:7726"/>
<dbReference type="MANE-Select" id="ENST00000454678.7">
    <property type="protein sequence ID" value="ENSP00000410446.2"/>
    <property type="RefSeq nucleotide sequence ID" value="NM_003449.5"/>
    <property type="RefSeq protein sequence ID" value="NP_003440.1"/>
</dbReference>
<dbReference type="UCSC" id="uc003npr.3">
    <property type="organism name" value="human"/>
</dbReference>
<dbReference type="AGR" id="HGNC:12962"/>
<dbReference type="CTD" id="7726"/>
<dbReference type="DisGeNET" id="7726"/>
<dbReference type="GeneCards" id="TRIM26"/>
<dbReference type="HGNC" id="HGNC:12962">
    <property type="gene designation" value="TRIM26"/>
</dbReference>
<dbReference type="HPA" id="ENSG00000234127">
    <property type="expression patterns" value="Low tissue specificity"/>
</dbReference>
<dbReference type="MIM" id="600830">
    <property type="type" value="gene"/>
</dbReference>
<dbReference type="neXtProt" id="NX_Q12899"/>
<dbReference type="OpenTargets" id="ENSG00000234127"/>
<dbReference type="PharmGKB" id="PA37544"/>
<dbReference type="VEuPathDB" id="HostDB:ENSG00000234127"/>
<dbReference type="eggNOG" id="KOG2177">
    <property type="taxonomic scope" value="Eukaryota"/>
</dbReference>
<dbReference type="GeneTree" id="ENSGT00940000158668"/>
<dbReference type="HOGENOM" id="CLU_013137_0_3_1"/>
<dbReference type="InParanoid" id="Q12899"/>
<dbReference type="OMA" id="PFFWLNW"/>
<dbReference type="OrthoDB" id="654191at2759"/>
<dbReference type="PAN-GO" id="Q12899">
    <property type="GO annotations" value="5 GO annotations based on evolutionary models"/>
</dbReference>
<dbReference type="PhylomeDB" id="Q12899"/>
<dbReference type="TreeFam" id="TF342569"/>
<dbReference type="PathwayCommons" id="Q12899"/>
<dbReference type="Reactome" id="R-HSA-877300">
    <property type="pathway name" value="Interferon gamma signaling"/>
</dbReference>
<dbReference type="SignaLink" id="Q12899"/>
<dbReference type="SIGNOR" id="Q12899"/>
<dbReference type="BioGRID-ORCS" id="7726">
    <property type="hits" value="8 hits in 1183 CRISPR screens"/>
</dbReference>
<dbReference type="ChiTaRS" id="TRIM26">
    <property type="organism name" value="human"/>
</dbReference>
<dbReference type="GenomeRNAi" id="7726"/>
<dbReference type="Pharos" id="Q12899">
    <property type="development level" value="Tbio"/>
</dbReference>
<dbReference type="PRO" id="PR:Q12899"/>
<dbReference type="Proteomes" id="UP000005640">
    <property type="component" value="Chromosome 6"/>
</dbReference>
<dbReference type="RNAct" id="Q12899">
    <property type="molecule type" value="protein"/>
</dbReference>
<dbReference type="Bgee" id="ENSG00000234127">
    <property type="expression patterns" value="Expressed in granulocyte and 106 other cell types or tissues"/>
</dbReference>
<dbReference type="ExpressionAtlas" id="Q12899">
    <property type="expression patterns" value="baseline and differential"/>
</dbReference>
<dbReference type="GO" id="GO:0005737">
    <property type="term" value="C:cytoplasm"/>
    <property type="evidence" value="ECO:0000314"/>
    <property type="project" value="UniProt"/>
</dbReference>
<dbReference type="GO" id="GO:0005829">
    <property type="term" value="C:cytosol"/>
    <property type="evidence" value="ECO:0000304"/>
    <property type="project" value="Reactome"/>
</dbReference>
<dbReference type="GO" id="GO:0005634">
    <property type="term" value="C:nucleus"/>
    <property type="evidence" value="ECO:0000314"/>
    <property type="project" value="UniProt"/>
</dbReference>
<dbReference type="GO" id="GO:0061630">
    <property type="term" value="F:ubiquitin protein ligase activity"/>
    <property type="evidence" value="ECO:0000314"/>
    <property type="project" value="UniProt"/>
</dbReference>
<dbReference type="GO" id="GO:0008270">
    <property type="term" value="F:zinc ion binding"/>
    <property type="evidence" value="ECO:0007669"/>
    <property type="project" value="UniProtKB-KW"/>
</dbReference>
<dbReference type="GO" id="GO:0046597">
    <property type="term" value="P:host-mediated suppression of symbiont invasion"/>
    <property type="evidence" value="ECO:0000314"/>
    <property type="project" value="UniProtKB"/>
</dbReference>
<dbReference type="GO" id="GO:0045087">
    <property type="term" value="P:innate immune response"/>
    <property type="evidence" value="ECO:0000314"/>
    <property type="project" value="UniProtKB"/>
</dbReference>
<dbReference type="GO" id="GO:0051091">
    <property type="term" value="P:positive regulation of DNA-binding transcription factor activity"/>
    <property type="evidence" value="ECO:0000314"/>
    <property type="project" value="UniProtKB"/>
</dbReference>
<dbReference type="GO" id="GO:1901224">
    <property type="term" value="P:positive regulation of non-canonical NF-kappaB signal transduction"/>
    <property type="evidence" value="ECO:0000314"/>
    <property type="project" value="UniProt"/>
</dbReference>
<dbReference type="GO" id="GO:0043161">
    <property type="term" value="P:proteasome-mediated ubiquitin-dependent protein catabolic process"/>
    <property type="evidence" value="ECO:0000314"/>
    <property type="project" value="UniProt"/>
</dbReference>
<dbReference type="GO" id="GO:0070979">
    <property type="term" value="P:protein K11-linked ubiquitination"/>
    <property type="evidence" value="ECO:0000314"/>
    <property type="project" value="UniProt"/>
</dbReference>
<dbReference type="GO" id="GO:0044790">
    <property type="term" value="P:suppression of viral release by host"/>
    <property type="evidence" value="ECO:0000314"/>
    <property type="project" value="UniProtKB"/>
</dbReference>
<dbReference type="CDD" id="cd19765">
    <property type="entry name" value="Bbox2_TRIM10-like"/>
    <property type="match status" value="1"/>
</dbReference>
<dbReference type="CDD" id="cd16598">
    <property type="entry name" value="RING-HC_TRIM26_C-IV"/>
    <property type="match status" value="1"/>
</dbReference>
<dbReference type="CDD" id="cd15826">
    <property type="entry name" value="SPRY_PRY_TRIM15"/>
    <property type="match status" value="1"/>
</dbReference>
<dbReference type="FunFam" id="2.60.120.920:FF:000032">
    <property type="entry name" value="Tripartite motif-containing protein 26"/>
    <property type="match status" value="1"/>
</dbReference>
<dbReference type="FunFam" id="2.60.120.920:FF:000039">
    <property type="entry name" value="Tripartite motif-containing protein 26"/>
    <property type="match status" value="1"/>
</dbReference>
<dbReference type="FunFam" id="3.30.160.60:FF:001212">
    <property type="entry name" value="Tripartite motif-containing protein 26"/>
    <property type="match status" value="1"/>
</dbReference>
<dbReference type="FunFam" id="3.30.40.10:FF:000361">
    <property type="entry name" value="Tripartite motif-containing protein 26"/>
    <property type="match status" value="1"/>
</dbReference>
<dbReference type="Gene3D" id="2.60.120.920">
    <property type="match status" value="2"/>
</dbReference>
<dbReference type="Gene3D" id="3.30.160.60">
    <property type="entry name" value="Classic Zinc Finger"/>
    <property type="match status" value="1"/>
</dbReference>
<dbReference type="Gene3D" id="3.30.40.10">
    <property type="entry name" value="Zinc/RING finger domain, C3HC4 (zinc finger)"/>
    <property type="match status" value="1"/>
</dbReference>
<dbReference type="InterPro" id="IPR001870">
    <property type="entry name" value="B30.2/SPRY"/>
</dbReference>
<dbReference type="InterPro" id="IPR043136">
    <property type="entry name" value="B30.2/SPRY_sf"/>
</dbReference>
<dbReference type="InterPro" id="IPR003879">
    <property type="entry name" value="Butyrophylin_SPRY"/>
</dbReference>
<dbReference type="InterPro" id="IPR013320">
    <property type="entry name" value="ConA-like_dom_sf"/>
</dbReference>
<dbReference type="InterPro" id="IPR006574">
    <property type="entry name" value="PRY"/>
</dbReference>
<dbReference type="InterPro" id="IPR003877">
    <property type="entry name" value="SPRY_dom"/>
</dbReference>
<dbReference type="InterPro" id="IPR050143">
    <property type="entry name" value="TRIM/RBCC"/>
</dbReference>
<dbReference type="InterPro" id="IPR000315">
    <property type="entry name" value="Znf_B-box"/>
</dbReference>
<dbReference type="InterPro" id="IPR001841">
    <property type="entry name" value="Znf_RING"/>
</dbReference>
<dbReference type="InterPro" id="IPR013083">
    <property type="entry name" value="Znf_RING/FYVE/PHD"/>
</dbReference>
<dbReference type="PANTHER" id="PTHR24103">
    <property type="entry name" value="E3 UBIQUITIN-PROTEIN LIGASE TRIM"/>
    <property type="match status" value="1"/>
</dbReference>
<dbReference type="Pfam" id="PF13765">
    <property type="entry name" value="PRY"/>
    <property type="match status" value="1"/>
</dbReference>
<dbReference type="Pfam" id="PF00622">
    <property type="entry name" value="SPRY"/>
    <property type="match status" value="1"/>
</dbReference>
<dbReference type="Pfam" id="PF00643">
    <property type="entry name" value="zf-B_box"/>
    <property type="match status" value="1"/>
</dbReference>
<dbReference type="Pfam" id="PF15227">
    <property type="entry name" value="zf-C3HC4_4"/>
    <property type="match status" value="1"/>
</dbReference>
<dbReference type="PRINTS" id="PR01407">
    <property type="entry name" value="BUTYPHLNCDUF"/>
</dbReference>
<dbReference type="SMART" id="SM00336">
    <property type="entry name" value="BBOX"/>
    <property type="match status" value="1"/>
</dbReference>
<dbReference type="SMART" id="SM00589">
    <property type="entry name" value="PRY"/>
    <property type="match status" value="1"/>
</dbReference>
<dbReference type="SMART" id="SM00184">
    <property type="entry name" value="RING"/>
    <property type="match status" value="1"/>
</dbReference>
<dbReference type="SMART" id="SM00449">
    <property type="entry name" value="SPRY"/>
    <property type="match status" value="1"/>
</dbReference>
<dbReference type="SUPFAM" id="SSF57845">
    <property type="entry name" value="B-box zinc-binding domain"/>
    <property type="match status" value="1"/>
</dbReference>
<dbReference type="SUPFAM" id="SSF49899">
    <property type="entry name" value="Concanavalin A-like lectins/glucanases"/>
    <property type="match status" value="2"/>
</dbReference>
<dbReference type="SUPFAM" id="SSF57850">
    <property type="entry name" value="RING/U-box"/>
    <property type="match status" value="1"/>
</dbReference>
<dbReference type="PROSITE" id="PS50188">
    <property type="entry name" value="B302_SPRY"/>
    <property type="match status" value="1"/>
</dbReference>
<dbReference type="PROSITE" id="PS50119">
    <property type="entry name" value="ZF_BBOX"/>
    <property type="match status" value="1"/>
</dbReference>
<dbReference type="PROSITE" id="PS50089">
    <property type="entry name" value="ZF_RING_2"/>
    <property type="match status" value="1"/>
</dbReference>
<reference key="1">
    <citation type="journal article" date="1995" name="Genomics">
        <title>Cloning of a new 'finger' protein gene (ZNF173) within the class I region of the human MHC.</title>
        <authorList>
            <person name="Chu T.W."/>
            <person name="Capossela A."/>
            <person name="Coleman R."/>
            <person name="Goei V.L."/>
            <person name="Nallur G."/>
            <person name="Gruen J.R."/>
        </authorList>
    </citation>
    <scope>NUCLEOTIDE SEQUENCE [MRNA]</scope>
</reference>
<reference key="2">
    <citation type="submission" date="1999-09" db="EMBL/GenBank/DDBJ databases">
        <title>Homo sapiens 2,229,817bp genomic DNA of 6p21.3 HLA class I region.</title>
        <authorList>
            <person name="Shiina S."/>
            <person name="Tamiya G."/>
            <person name="Oka A."/>
            <person name="Inoko H."/>
        </authorList>
    </citation>
    <scope>NUCLEOTIDE SEQUENCE [LARGE SCALE GENOMIC DNA]</scope>
</reference>
<reference key="3">
    <citation type="submission" date="2002-07" db="EMBL/GenBank/DDBJ databases">
        <title>Genome diversity in HLA: a new strategy for detection of genetic polymorphisms in expressed genes within the HLA class III and class I regions.</title>
        <authorList>
            <person name="Shiina T."/>
            <person name="Ota M."/>
            <person name="Katsuyama Y."/>
            <person name="Hashimoto N."/>
            <person name="Inoko H."/>
        </authorList>
    </citation>
    <scope>NUCLEOTIDE SEQUENCE [LARGE SCALE GENOMIC DNA]</scope>
</reference>
<reference key="4">
    <citation type="journal article" date="2006" name="Genetics">
        <title>Rapid evolution of major histocompatibility complex class I genes in primates generates new disease alleles in humans via hitchhiking diversity.</title>
        <authorList>
            <person name="Shiina T."/>
            <person name="Ota M."/>
            <person name="Shimizu S."/>
            <person name="Katsuyama Y."/>
            <person name="Hashimoto N."/>
            <person name="Takasu M."/>
            <person name="Anzai T."/>
            <person name="Kulski J.K."/>
            <person name="Kikkawa E."/>
            <person name="Naruse T."/>
            <person name="Kimura N."/>
            <person name="Yanagiya K."/>
            <person name="Watanabe A."/>
            <person name="Hosomichi K."/>
            <person name="Kohara S."/>
            <person name="Iwamoto C."/>
            <person name="Umehara Y."/>
            <person name="Meyer A."/>
            <person name="Wanner V."/>
            <person name="Sano K."/>
            <person name="Macquin C."/>
            <person name="Ikeo K."/>
            <person name="Tokunaga K."/>
            <person name="Gojobori T."/>
            <person name="Inoko H."/>
            <person name="Bahram S."/>
        </authorList>
    </citation>
    <scope>NUCLEOTIDE SEQUENCE [LARGE SCALE GENOMIC DNA]</scope>
    <source>
        <tissue>Peripheral blood leukocyte</tissue>
    </source>
</reference>
<reference key="5">
    <citation type="journal article" date="2003" name="Nature">
        <title>The DNA sequence and analysis of human chromosome 6.</title>
        <authorList>
            <person name="Mungall A.J."/>
            <person name="Palmer S.A."/>
            <person name="Sims S.K."/>
            <person name="Edwards C.A."/>
            <person name="Ashurst J.L."/>
            <person name="Wilming L."/>
            <person name="Jones M.C."/>
            <person name="Horton R."/>
            <person name="Hunt S.E."/>
            <person name="Scott C.E."/>
            <person name="Gilbert J.G.R."/>
            <person name="Clamp M.E."/>
            <person name="Bethel G."/>
            <person name="Milne S."/>
            <person name="Ainscough R."/>
            <person name="Almeida J.P."/>
            <person name="Ambrose K.D."/>
            <person name="Andrews T.D."/>
            <person name="Ashwell R.I.S."/>
            <person name="Babbage A.K."/>
            <person name="Bagguley C.L."/>
            <person name="Bailey J."/>
            <person name="Banerjee R."/>
            <person name="Barker D.J."/>
            <person name="Barlow K.F."/>
            <person name="Bates K."/>
            <person name="Beare D.M."/>
            <person name="Beasley H."/>
            <person name="Beasley O."/>
            <person name="Bird C.P."/>
            <person name="Blakey S.E."/>
            <person name="Bray-Allen S."/>
            <person name="Brook J."/>
            <person name="Brown A.J."/>
            <person name="Brown J.Y."/>
            <person name="Burford D.C."/>
            <person name="Burrill W."/>
            <person name="Burton J."/>
            <person name="Carder C."/>
            <person name="Carter N.P."/>
            <person name="Chapman J.C."/>
            <person name="Clark S.Y."/>
            <person name="Clark G."/>
            <person name="Clee C.M."/>
            <person name="Clegg S."/>
            <person name="Cobley V."/>
            <person name="Collier R.E."/>
            <person name="Collins J.E."/>
            <person name="Colman L.K."/>
            <person name="Corby N.R."/>
            <person name="Coville G.J."/>
            <person name="Culley K.M."/>
            <person name="Dhami P."/>
            <person name="Davies J."/>
            <person name="Dunn M."/>
            <person name="Earthrowl M.E."/>
            <person name="Ellington A.E."/>
            <person name="Evans K.A."/>
            <person name="Faulkner L."/>
            <person name="Francis M.D."/>
            <person name="Frankish A."/>
            <person name="Frankland J."/>
            <person name="French L."/>
            <person name="Garner P."/>
            <person name="Garnett J."/>
            <person name="Ghori M.J."/>
            <person name="Gilby L.M."/>
            <person name="Gillson C.J."/>
            <person name="Glithero R.J."/>
            <person name="Grafham D.V."/>
            <person name="Grant M."/>
            <person name="Gribble S."/>
            <person name="Griffiths C."/>
            <person name="Griffiths M.N.D."/>
            <person name="Hall R."/>
            <person name="Halls K.S."/>
            <person name="Hammond S."/>
            <person name="Harley J.L."/>
            <person name="Hart E.A."/>
            <person name="Heath P.D."/>
            <person name="Heathcott R."/>
            <person name="Holmes S.J."/>
            <person name="Howden P.J."/>
            <person name="Howe K.L."/>
            <person name="Howell G.R."/>
            <person name="Huckle E."/>
            <person name="Humphray S.J."/>
            <person name="Humphries M.D."/>
            <person name="Hunt A.R."/>
            <person name="Johnson C.M."/>
            <person name="Joy A.A."/>
            <person name="Kay M."/>
            <person name="Keenan S.J."/>
            <person name="Kimberley A.M."/>
            <person name="King A."/>
            <person name="Laird G.K."/>
            <person name="Langford C."/>
            <person name="Lawlor S."/>
            <person name="Leongamornlert D.A."/>
            <person name="Leversha M."/>
            <person name="Lloyd C.R."/>
            <person name="Lloyd D.M."/>
            <person name="Loveland J.E."/>
            <person name="Lovell J."/>
            <person name="Martin S."/>
            <person name="Mashreghi-Mohammadi M."/>
            <person name="Maslen G.L."/>
            <person name="Matthews L."/>
            <person name="McCann O.T."/>
            <person name="McLaren S.J."/>
            <person name="McLay K."/>
            <person name="McMurray A."/>
            <person name="Moore M.J.F."/>
            <person name="Mullikin J.C."/>
            <person name="Niblett D."/>
            <person name="Nickerson T."/>
            <person name="Novik K.L."/>
            <person name="Oliver K."/>
            <person name="Overton-Larty E.K."/>
            <person name="Parker A."/>
            <person name="Patel R."/>
            <person name="Pearce A.V."/>
            <person name="Peck A.I."/>
            <person name="Phillimore B.J.C.T."/>
            <person name="Phillips S."/>
            <person name="Plumb R.W."/>
            <person name="Porter K.M."/>
            <person name="Ramsey Y."/>
            <person name="Ranby S.A."/>
            <person name="Rice C.M."/>
            <person name="Ross M.T."/>
            <person name="Searle S.M."/>
            <person name="Sehra H.K."/>
            <person name="Sheridan E."/>
            <person name="Skuce C.D."/>
            <person name="Smith S."/>
            <person name="Smith M."/>
            <person name="Spraggon L."/>
            <person name="Squares S.L."/>
            <person name="Steward C.A."/>
            <person name="Sycamore N."/>
            <person name="Tamlyn-Hall G."/>
            <person name="Tester J."/>
            <person name="Theaker A.J."/>
            <person name="Thomas D.W."/>
            <person name="Thorpe A."/>
            <person name="Tracey A."/>
            <person name="Tromans A."/>
            <person name="Tubby B."/>
            <person name="Wall M."/>
            <person name="Wallis J.M."/>
            <person name="West A.P."/>
            <person name="White S.S."/>
            <person name="Whitehead S.L."/>
            <person name="Whittaker H."/>
            <person name="Wild A."/>
            <person name="Willey D.J."/>
            <person name="Wilmer T.E."/>
            <person name="Wood J.M."/>
            <person name="Wray P.W."/>
            <person name="Wyatt J.C."/>
            <person name="Young L."/>
            <person name="Younger R.M."/>
            <person name="Bentley D.R."/>
            <person name="Coulson A."/>
            <person name="Durbin R.M."/>
            <person name="Hubbard T."/>
            <person name="Sulston J.E."/>
            <person name="Dunham I."/>
            <person name="Rogers J."/>
            <person name="Beck S."/>
        </authorList>
    </citation>
    <scope>NUCLEOTIDE SEQUENCE [LARGE SCALE GENOMIC DNA]</scope>
</reference>
<reference key="6">
    <citation type="submission" date="2005-07" db="EMBL/GenBank/DDBJ databases">
        <authorList>
            <person name="Mural R.J."/>
            <person name="Istrail S."/>
            <person name="Sutton G."/>
            <person name="Florea L."/>
            <person name="Halpern A.L."/>
            <person name="Mobarry C.M."/>
            <person name="Lippert R."/>
            <person name="Walenz B."/>
            <person name="Shatkay H."/>
            <person name="Dew I."/>
            <person name="Miller J.R."/>
            <person name="Flanigan M.J."/>
            <person name="Edwards N.J."/>
            <person name="Bolanos R."/>
            <person name="Fasulo D."/>
            <person name="Halldorsson B.V."/>
            <person name="Hannenhalli S."/>
            <person name="Turner R."/>
            <person name="Yooseph S."/>
            <person name="Lu F."/>
            <person name="Nusskern D.R."/>
            <person name="Shue B.C."/>
            <person name="Zheng X.H."/>
            <person name="Zhong F."/>
            <person name="Delcher A.L."/>
            <person name="Huson D.H."/>
            <person name="Kravitz S.A."/>
            <person name="Mouchard L."/>
            <person name="Reinert K."/>
            <person name="Remington K.A."/>
            <person name="Clark A.G."/>
            <person name="Waterman M.S."/>
            <person name="Eichler E.E."/>
            <person name="Adams M.D."/>
            <person name="Hunkapiller M.W."/>
            <person name="Myers E.W."/>
            <person name="Venter J.C."/>
        </authorList>
    </citation>
    <scope>NUCLEOTIDE SEQUENCE [LARGE SCALE GENOMIC DNA]</scope>
</reference>
<reference key="7">
    <citation type="journal article" date="2004" name="Genome Res.">
        <title>The status, quality, and expansion of the NIH full-length cDNA project: the Mammalian Gene Collection (MGC).</title>
        <authorList>
            <consortium name="The MGC Project Team"/>
        </authorList>
    </citation>
    <scope>NUCLEOTIDE SEQUENCE [LARGE SCALE MRNA]</scope>
    <source>
        <tissue>Brain</tissue>
        <tissue>Skin</tissue>
    </source>
</reference>
<reference key="8">
    <citation type="journal article" date="2011" name="PLoS ONE">
        <title>The inhibitor of growth protein 5 (ING5) depends on INCA1 as a co-factor for its antiproliferative effects.</title>
        <authorList>
            <person name="Zhang F."/>
            <person name="Baeumer N."/>
            <person name="Rode M."/>
            <person name="Ji P."/>
            <person name="Zhang T."/>
            <person name="Berdel W.E."/>
            <person name="Mueller-Tidow C."/>
        </authorList>
    </citation>
    <scope>INTERACTION WITH INCA1</scope>
</reference>
<reference key="9">
    <citation type="journal article" date="2013" name="Cell">
        <title>Jmjd3 inhibits reprogramming by upregulating expression of INK4a/Arf and targeting PHF20 for ubiquitination.</title>
        <authorList>
            <person name="Zhao W."/>
            <person name="Li Q."/>
            <person name="Ayers S."/>
            <person name="Gu Y."/>
            <person name="Shi Z."/>
            <person name="Zhu Q."/>
            <person name="Chen Y."/>
            <person name="Wang H.Y."/>
            <person name="Wang R.F."/>
        </authorList>
    </citation>
    <scope>FUNCTION</scope>
</reference>
<reference key="10">
    <citation type="journal article" date="2015" name="PLoS Pathog.">
        <title>TRIM26 negatively regulates interferon-beta production and antiviral response through polyubiquitination and degradation of nuclear IRF3.</title>
        <authorList>
            <person name="Wang P."/>
            <person name="Zhao W."/>
            <person name="Zhao K."/>
            <person name="Zhang L."/>
            <person name="Gao C."/>
        </authorList>
    </citation>
    <scope>FUNCTION</scope>
    <scope>SUBCELLULAR LOCATION</scope>
</reference>
<reference key="11">
    <citation type="journal article" date="2016" name="J. Mol. Cell Biol.">
        <title>Autoubiquitination of TRIM26 links TBK1 to NEMO in RLR-mediated innate antiviral immune response.</title>
        <authorList>
            <person name="Ran Y."/>
            <person name="Zhang J."/>
            <person name="Liu L.L."/>
            <person name="Pan Z.Y."/>
            <person name="Nie Y."/>
            <person name="Zhang H.Y."/>
            <person name="Wang Y.Y."/>
        </authorList>
    </citation>
    <scope>FUNCTION</scope>
    <scope>INTERACTION WITH TBK1</scope>
    <scope>UBIQUITINATION</scope>
</reference>
<reference key="12">
    <citation type="journal article" date="2018" name="Mol. Cell. Biol.">
        <title>Transforming Growth Factor beta-Induced Proliferative Arrest Mediated by TRIM26-Dependent TAF7 Degradation and Its Antagonism by MYC.</title>
        <authorList>
            <person name="Nakagawa T."/>
            <person name="Hosogane M."/>
            <person name="Nakagawa M."/>
            <person name="Morohoshi A."/>
            <person name="Funayama R."/>
            <person name="Nakayama K."/>
        </authorList>
    </citation>
    <scope>FUNCTION</scope>
    <scope>INDUCTION BY TGF-BETA</scope>
    <scope>CATALYTIC ACTIVITY</scope>
</reference>
<reference key="13">
    <citation type="journal article" date="2018" name="Mol. Cell. Biol.">
        <title>NTH1 Is a New Target for Ubiquitylation-Dependent Regulation by TRIM26 Required for the Cellular Response to Oxidative Stress.</title>
        <authorList>
            <person name="Williams S.C."/>
            <person name="Parsons J.L."/>
        </authorList>
    </citation>
    <scope>FUNCTION</scope>
    <scope>CATALYTIC ACTIVITY</scope>
</reference>
<reference key="14">
    <citation type="journal article" date="2021" name="Viruses">
        <title>TRIM26 Facilitates HSV-2 Infection by Downregulating Antiviral Responses through the IRF3 Pathway.</title>
        <authorList>
            <person name="Dhawan T."/>
            <person name="Zahoor M.A."/>
            <person name="Heryani N."/>
            <person name="Workenhe S.T."/>
            <person name="Nazli A."/>
            <person name="Kaushic C."/>
        </authorList>
    </citation>
    <scope>FUNCTION (MICROBIAL INFECTION)</scope>
    <scope>SUBCELLULAR LOCATION</scope>
    <scope>INDUCTION BY HERPES SIMPLEX VIRUS TYPE 2</scope>
</reference>
<reference key="15">
    <citation type="journal article" date="2021" name="Cell Death Differ.">
        <title>TRIM26 positively regulates the inflammatory immune response through K11-linked ubiquitination of TAB1.</title>
        <authorList>
            <person name="Zhao J."/>
            <person name="Cai B."/>
            <person name="Shao Z."/>
            <person name="Zhang L."/>
            <person name="Zheng Y."/>
            <person name="Ma C."/>
            <person name="Yi F."/>
            <person name="Liu B."/>
            <person name="Gao C."/>
        </authorList>
    </citation>
    <scope>FUNCTION</scope>
    <scope>SUBCELLULAR LOCATION</scope>
    <scope>CATALYTIC ACTIVITY</scope>
    <scope>MUTAGENESIS OF CYS-16</scope>
</reference>
<reference key="16">
    <citation type="journal article" date="2021" name="Nat. Commun.">
        <title>Competitive binding of E3 ligases TRIM26 and WWP2 controls SOX2 in glioblastoma.</title>
        <authorList>
            <person name="Mahlokozera T."/>
            <person name="Patel B."/>
            <person name="Chen H."/>
            <person name="Desouza P."/>
            <person name="Qu X."/>
            <person name="Mao D.D."/>
            <person name="Hafez D."/>
            <person name="Yang W."/>
            <person name="Taiwo R."/>
            <person name="Paturu M."/>
            <person name="Salehi A."/>
            <person name="Gujar A.D."/>
            <person name="Dunn G.P."/>
            <person name="Mosammaparast N."/>
            <person name="Petti A.A."/>
            <person name="Yano H."/>
            <person name="Kim A.H."/>
        </authorList>
    </citation>
    <scope>FUNCTION</scope>
    <scope>INTERACTION WITH SOX2</scope>
</reference>
<reference key="17">
    <citation type="journal article" date="2022" name="Int. J. Mol. Sci.">
        <title>TRIM26 Maintains Cell Survival in Response to Oxidative Stress through Regulating DNA Glycosylase Stability.</title>
        <authorList>
            <person name="Konis S.M.R."/>
            <person name="Hughes J.R."/>
            <person name="Parsons J.L."/>
        </authorList>
    </citation>
    <scope>FUNCTION</scope>
</reference>
<reference key="18">
    <citation type="journal article" date="2022" name="Aliment. Pharmacol. Ther.">
        <title>TRIM26 inhibits hepatitis B virus replication by promoting HBx degradation and TRIM26 genetic polymorphism predicts PegIFNalpha treatment response of HBeAg-positive chronic hepatitis B Patients.</title>
        <authorList>
            <person name="Luo M."/>
            <person name="Hou J."/>
            <person name="Mai H."/>
            <person name="Chen J."/>
            <person name="Chen H."/>
            <person name="Zhou B."/>
            <person name="Hou J."/>
            <person name="Jiang D.K."/>
        </authorList>
    </citation>
    <scope>FUNCTION</scope>
    <scope>SUBCELLULAR LOCATION</scope>
    <scope>INDUCTION BY TYPE I INTERFERON</scope>
</reference>